<proteinExistence type="evidence at transcript level"/>
<sequence length="144" mass="16389">MVALKTCSLLLVLLFLAVGLGEKEEVEFRSHAKFAGPRPRGPRYAEGTFISDYSIAMDKIRQQDFVNWLLAQRGKKSDWKHNITQREARALVLAGQSQGKEDKEAQESSLPKSLSDDDVLRDLLIQELLAWMVDQTELCRLRSQ</sequence>
<organism>
    <name type="scientific">Mus musculus</name>
    <name type="common">Mouse</name>
    <dbReference type="NCBI Taxonomy" id="10090"/>
    <lineage>
        <taxon>Eukaryota</taxon>
        <taxon>Metazoa</taxon>
        <taxon>Chordata</taxon>
        <taxon>Craniata</taxon>
        <taxon>Vertebrata</taxon>
        <taxon>Euteleostomi</taxon>
        <taxon>Mammalia</taxon>
        <taxon>Eutheria</taxon>
        <taxon>Euarchontoglires</taxon>
        <taxon>Glires</taxon>
        <taxon>Rodentia</taxon>
        <taxon>Myomorpha</taxon>
        <taxon>Muroidea</taxon>
        <taxon>Muridae</taxon>
        <taxon>Murinae</taxon>
        <taxon>Mus</taxon>
        <taxon>Mus</taxon>
    </lineage>
</organism>
<comment type="function">
    <text>Potent stimulator of insulin secretion and relatively poor inhibitor of gastric acid secretion.</text>
</comment>
<comment type="subcellular location">
    <subcellularLocation>
        <location>Secreted</location>
    </subcellularLocation>
</comment>
<comment type="similarity">
    <text evidence="3">Belongs to the glucagon family.</text>
</comment>
<accession>P48756</accession>
<accession>Q9D887</accession>
<name>GIP_MOUSE</name>
<protein>
    <recommendedName>
        <fullName>Gastric inhibitory polypeptide</fullName>
        <shortName>GIP</shortName>
    </recommendedName>
    <alternativeName>
        <fullName>Glucose-dependent insulinotropic polypeptide</fullName>
    </alternativeName>
</protein>
<feature type="signal peptide" evidence="1">
    <location>
        <begin position="1"/>
        <end position="21"/>
    </location>
</feature>
<feature type="propeptide" id="PRO_0000011217">
    <location>
        <begin position="22"/>
        <end position="42"/>
    </location>
</feature>
<feature type="peptide" id="PRO_0000011218" description="Gastric inhibitory polypeptide">
    <location>
        <begin position="44"/>
        <end position="85"/>
    </location>
</feature>
<feature type="propeptide" id="PRO_0000011219">
    <location>
        <begin position="87"/>
        <end position="144"/>
    </location>
</feature>
<feature type="region of interest" description="Disordered" evidence="2">
    <location>
        <begin position="94"/>
        <end position="113"/>
    </location>
</feature>
<feature type="sequence conflict" description="In Ref. 1; AAC52731." evidence="3" ref="1">
    <original>T</original>
    <variation>A</variation>
    <location>
        <position position="136"/>
    </location>
</feature>
<keyword id="KW-0165">Cleavage on pair of basic residues</keyword>
<keyword id="KW-0372">Hormone</keyword>
<keyword id="KW-1185">Reference proteome</keyword>
<keyword id="KW-0964">Secreted</keyword>
<keyword id="KW-0732">Signal</keyword>
<gene>
    <name type="primary">Gip</name>
</gene>
<reference key="1">
    <citation type="journal article" date="1996" name="Biochim. Biophys. Acta">
        <title>Isolation of a murine glucose-dependent insulinotropic polypeptide (GIP) cDNA from a tumor cell line (STC6-14) and quantification of glucose-induced increases in GIP mRNA.</title>
        <authorList>
            <person name="Schieldrop P.J."/>
            <person name="Gelling R.W."/>
            <person name="Elliot R."/>
            <person name="Hewitt J."/>
            <person name="Kieffer T.J."/>
            <person name="McIntosh C.H.S."/>
            <person name="Pederson R.A."/>
        </authorList>
    </citation>
    <scope>NUCLEOTIDE SEQUENCE [MRNA]</scope>
</reference>
<reference key="2">
    <citation type="journal article" date="2005" name="Science">
        <title>The transcriptional landscape of the mammalian genome.</title>
        <authorList>
            <person name="Carninci P."/>
            <person name="Kasukawa T."/>
            <person name="Katayama S."/>
            <person name="Gough J."/>
            <person name="Frith M.C."/>
            <person name="Maeda N."/>
            <person name="Oyama R."/>
            <person name="Ravasi T."/>
            <person name="Lenhard B."/>
            <person name="Wells C."/>
            <person name="Kodzius R."/>
            <person name="Shimokawa K."/>
            <person name="Bajic V.B."/>
            <person name="Brenner S.E."/>
            <person name="Batalov S."/>
            <person name="Forrest A.R."/>
            <person name="Zavolan M."/>
            <person name="Davis M.J."/>
            <person name="Wilming L.G."/>
            <person name="Aidinis V."/>
            <person name="Allen J.E."/>
            <person name="Ambesi-Impiombato A."/>
            <person name="Apweiler R."/>
            <person name="Aturaliya R.N."/>
            <person name="Bailey T.L."/>
            <person name="Bansal M."/>
            <person name="Baxter L."/>
            <person name="Beisel K.W."/>
            <person name="Bersano T."/>
            <person name="Bono H."/>
            <person name="Chalk A.M."/>
            <person name="Chiu K.P."/>
            <person name="Choudhary V."/>
            <person name="Christoffels A."/>
            <person name="Clutterbuck D.R."/>
            <person name="Crowe M.L."/>
            <person name="Dalla E."/>
            <person name="Dalrymple B.P."/>
            <person name="de Bono B."/>
            <person name="Della Gatta G."/>
            <person name="di Bernardo D."/>
            <person name="Down T."/>
            <person name="Engstrom P."/>
            <person name="Fagiolini M."/>
            <person name="Faulkner G."/>
            <person name="Fletcher C.F."/>
            <person name="Fukushima T."/>
            <person name="Furuno M."/>
            <person name="Futaki S."/>
            <person name="Gariboldi M."/>
            <person name="Georgii-Hemming P."/>
            <person name="Gingeras T.R."/>
            <person name="Gojobori T."/>
            <person name="Green R.E."/>
            <person name="Gustincich S."/>
            <person name="Harbers M."/>
            <person name="Hayashi Y."/>
            <person name="Hensch T.K."/>
            <person name="Hirokawa N."/>
            <person name="Hill D."/>
            <person name="Huminiecki L."/>
            <person name="Iacono M."/>
            <person name="Ikeo K."/>
            <person name="Iwama A."/>
            <person name="Ishikawa T."/>
            <person name="Jakt M."/>
            <person name="Kanapin A."/>
            <person name="Katoh M."/>
            <person name="Kawasawa Y."/>
            <person name="Kelso J."/>
            <person name="Kitamura H."/>
            <person name="Kitano H."/>
            <person name="Kollias G."/>
            <person name="Krishnan S.P."/>
            <person name="Kruger A."/>
            <person name="Kummerfeld S.K."/>
            <person name="Kurochkin I.V."/>
            <person name="Lareau L.F."/>
            <person name="Lazarevic D."/>
            <person name="Lipovich L."/>
            <person name="Liu J."/>
            <person name="Liuni S."/>
            <person name="McWilliam S."/>
            <person name="Madan Babu M."/>
            <person name="Madera M."/>
            <person name="Marchionni L."/>
            <person name="Matsuda H."/>
            <person name="Matsuzawa S."/>
            <person name="Miki H."/>
            <person name="Mignone F."/>
            <person name="Miyake S."/>
            <person name="Morris K."/>
            <person name="Mottagui-Tabar S."/>
            <person name="Mulder N."/>
            <person name="Nakano N."/>
            <person name="Nakauchi H."/>
            <person name="Ng P."/>
            <person name="Nilsson R."/>
            <person name="Nishiguchi S."/>
            <person name="Nishikawa S."/>
            <person name="Nori F."/>
            <person name="Ohara O."/>
            <person name="Okazaki Y."/>
            <person name="Orlando V."/>
            <person name="Pang K.C."/>
            <person name="Pavan W.J."/>
            <person name="Pavesi G."/>
            <person name="Pesole G."/>
            <person name="Petrovsky N."/>
            <person name="Piazza S."/>
            <person name="Reed J."/>
            <person name="Reid J.F."/>
            <person name="Ring B.Z."/>
            <person name="Ringwald M."/>
            <person name="Rost B."/>
            <person name="Ruan Y."/>
            <person name="Salzberg S.L."/>
            <person name="Sandelin A."/>
            <person name="Schneider C."/>
            <person name="Schoenbach C."/>
            <person name="Sekiguchi K."/>
            <person name="Semple C.A."/>
            <person name="Seno S."/>
            <person name="Sessa L."/>
            <person name="Sheng Y."/>
            <person name="Shibata Y."/>
            <person name="Shimada H."/>
            <person name="Shimada K."/>
            <person name="Silva D."/>
            <person name="Sinclair B."/>
            <person name="Sperling S."/>
            <person name="Stupka E."/>
            <person name="Sugiura K."/>
            <person name="Sultana R."/>
            <person name="Takenaka Y."/>
            <person name="Taki K."/>
            <person name="Tammoja K."/>
            <person name="Tan S.L."/>
            <person name="Tang S."/>
            <person name="Taylor M.S."/>
            <person name="Tegner J."/>
            <person name="Teichmann S.A."/>
            <person name="Ueda H.R."/>
            <person name="van Nimwegen E."/>
            <person name="Verardo R."/>
            <person name="Wei C.L."/>
            <person name="Yagi K."/>
            <person name="Yamanishi H."/>
            <person name="Zabarovsky E."/>
            <person name="Zhu S."/>
            <person name="Zimmer A."/>
            <person name="Hide W."/>
            <person name="Bult C."/>
            <person name="Grimmond S.M."/>
            <person name="Teasdale R.D."/>
            <person name="Liu E.T."/>
            <person name="Brusic V."/>
            <person name="Quackenbush J."/>
            <person name="Wahlestedt C."/>
            <person name="Mattick J.S."/>
            <person name="Hume D.A."/>
            <person name="Kai C."/>
            <person name="Sasaki D."/>
            <person name="Tomaru Y."/>
            <person name="Fukuda S."/>
            <person name="Kanamori-Katayama M."/>
            <person name="Suzuki M."/>
            <person name="Aoki J."/>
            <person name="Arakawa T."/>
            <person name="Iida J."/>
            <person name="Imamura K."/>
            <person name="Itoh M."/>
            <person name="Kato T."/>
            <person name="Kawaji H."/>
            <person name="Kawagashira N."/>
            <person name="Kawashima T."/>
            <person name="Kojima M."/>
            <person name="Kondo S."/>
            <person name="Konno H."/>
            <person name="Nakano K."/>
            <person name="Ninomiya N."/>
            <person name="Nishio T."/>
            <person name="Okada M."/>
            <person name="Plessy C."/>
            <person name="Shibata K."/>
            <person name="Shiraki T."/>
            <person name="Suzuki S."/>
            <person name="Tagami M."/>
            <person name="Waki K."/>
            <person name="Watahiki A."/>
            <person name="Okamura-Oho Y."/>
            <person name="Suzuki H."/>
            <person name="Kawai J."/>
            <person name="Hayashizaki Y."/>
        </authorList>
    </citation>
    <scope>NUCLEOTIDE SEQUENCE [LARGE SCALE MRNA]</scope>
    <source>
        <strain>C57BL/6J</strain>
        <tissue>Small intestine</tissue>
    </source>
</reference>
<reference key="3">
    <citation type="submission" date="2005-07" db="EMBL/GenBank/DDBJ databases">
        <authorList>
            <person name="Mural R.J."/>
            <person name="Istrail S."/>
            <person name="Sutton G.G."/>
            <person name="Florea L."/>
            <person name="Halpern A.L."/>
            <person name="Mobarry C.M."/>
            <person name="Lippert R."/>
            <person name="Walenz B."/>
            <person name="Shatkay H."/>
            <person name="Dew I."/>
            <person name="Miller J.R."/>
            <person name="Flanigan M.J."/>
            <person name="Edwards N.J."/>
            <person name="Bolanos R."/>
            <person name="Fasulo D."/>
            <person name="Halldorsson B.V."/>
            <person name="Hannenhalli S."/>
            <person name="Turner R."/>
            <person name="Yooseph S."/>
            <person name="Lu F."/>
            <person name="Nusskern D.R."/>
            <person name="Shue B.C."/>
            <person name="Zheng X.H."/>
            <person name="Zhong F."/>
            <person name="Delcher A.L."/>
            <person name="Huson D.H."/>
            <person name="Kravitz S.A."/>
            <person name="Mouchard L."/>
            <person name="Reinert K."/>
            <person name="Remington K.A."/>
            <person name="Clark A.G."/>
            <person name="Waterman M.S."/>
            <person name="Eichler E.E."/>
            <person name="Adams M.D."/>
            <person name="Hunkapiller M.W."/>
            <person name="Myers E.W."/>
            <person name="Venter J.C."/>
        </authorList>
    </citation>
    <scope>NUCLEOTIDE SEQUENCE [LARGE SCALE GENOMIC DNA]</scope>
</reference>
<reference key="4">
    <citation type="submission" date="2005-07" db="EMBL/GenBank/DDBJ databases">
        <authorList>
            <person name="Mural R.J."/>
            <person name="Adams M.D."/>
            <person name="Myers E.W."/>
            <person name="Smith H.O."/>
            <person name="Venter J.C."/>
        </authorList>
    </citation>
    <scope>NUCLEOTIDE SEQUENCE [LARGE SCALE GENOMIC DNA]</scope>
</reference>
<dbReference type="EMBL" id="U34295">
    <property type="protein sequence ID" value="AAC52731.1"/>
    <property type="molecule type" value="mRNA"/>
</dbReference>
<dbReference type="EMBL" id="AK008308">
    <property type="protein sequence ID" value="BAB25592.1"/>
    <property type="molecule type" value="mRNA"/>
</dbReference>
<dbReference type="EMBL" id="AL603682">
    <property type="status" value="NOT_ANNOTATED_CDS"/>
    <property type="molecule type" value="Genomic_DNA"/>
</dbReference>
<dbReference type="EMBL" id="CH466556">
    <property type="protein sequence ID" value="EDL16005.1"/>
    <property type="molecule type" value="Genomic_DNA"/>
</dbReference>
<dbReference type="CCDS" id="CCDS25287.1"/>
<dbReference type="PIR" id="S71426">
    <property type="entry name" value="S71426"/>
</dbReference>
<dbReference type="RefSeq" id="NP_032145.2">
    <property type="nucleotide sequence ID" value="NM_008119.2"/>
</dbReference>
<dbReference type="RefSeq" id="XP_006532287.1">
    <property type="nucleotide sequence ID" value="XM_006532224.4"/>
</dbReference>
<dbReference type="RefSeq" id="XP_006532288.1">
    <property type="nucleotide sequence ID" value="XM_006532225.4"/>
</dbReference>
<dbReference type="SMR" id="P48756"/>
<dbReference type="FunCoup" id="P48756">
    <property type="interactions" value="550"/>
</dbReference>
<dbReference type="STRING" id="10090.ENSMUSP00000099446"/>
<dbReference type="PhosphoSitePlus" id="P48756"/>
<dbReference type="PaxDb" id="10090-ENSMUSP00000099446"/>
<dbReference type="PeptideAtlas" id="P48756"/>
<dbReference type="ProteomicsDB" id="263360"/>
<dbReference type="Antibodypedia" id="3388">
    <property type="antibodies" value="358 antibodies from 29 providers"/>
</dbReference>
<dbReference type="Ensembl" id="ENSMUST00000103156.2">
    <property type="protein sequence ID" value="ENSMUSP00000099445.2"/>
    <property type="gene ID" value="ENSMUSG00000014351.13"/>
</dbReference>
<dbReference type="Ensembl" id="ENSMUST00000103157.10">
    <property type="protein sequence ID" value="ENSMUSP00000099446.4"/>
    <property type="gene ID" value="ENSMUSG00000014351.13"/>
</dbReference>
<dbReference type="GeneID" id="14607"/>
<dbReference type="KEGG" id="mmu:14607"/>
<dbReference type="UCSC" id="uc007lba.1">
    <property type="organism name" value="mouse"/>
</dbReference>
<dbReference type="AGR" id="MGI:107504"/>
<dbReference type="CTD" id="2695"/>
<dbReference type="MGI" id="MGI:107504">
    <property type="gene designation" value="Gip"/>
</dbReference>
<dbReference type="VEuPathDB" id="HostDB:ENSMUSG00000014351"/>
<dbReference type="eggNOG" id="ENOG502S7ZH">
    <property type="taxonomic scope" value="Eukaryota"/>
</dbReference>
<dbReference type="GeneTree" id="ENSGT00390000005121"/>
<dbReference type="HOGENOM" id="CLU_146415_0_0_1"/>
<dbReference type="InParanoid" id="P48756"/>
<dbReference type="OMA" id="GHSRFHT"/>
<dbReference type="OrthoDB" id="8874823at2759"/>
<dbReference type="PhylomeDB" id="P48756"/>
<dbReference type="TreeFam" id="TF332333"/>
<dbReference type="Reactome" id="R-MMU-400511">
    <property type="pathway name" value="Synthesis, secretion, and inactivation of Glucose-dependent Insulinotropic Polypeptide (GIP)"/>
</dbReference>
<dbReference type="Reactome" id="R-MMU-418555">
    <property type="pathway name" value="G alpha (s) signalling events"/>
</dbReference>
<dbReference type="Reactome" id="R-MMU-420092">
    <property type="pathway name" value="Glucagon-type ligand receptors"/>
</dbReference>
<dbReference type="BioGRID-ORCS" id="14607">
    <property type="hits" value="1 hit in 77 CRISPR screens"/>
</dbReference>
<dbReference type="ChiTaRS" id="Ctdsp1">
    <property type="organism name" value="mouse"/>
</dbReference>
<dbReference type="PRO" id="PR:P48756"/>
<dbReference type="Proteomes" id="UP000000589">
    <property type="component" value="Chromosome 11"/>
</dbReference>
<dbReference type="RNAct" id="P48756">
    <property type="molecule type" value="protein"/>
</dbReference>
<dbReference type="Bgee" id="ENSMUSG00000014351">
    <property type="expression patterns" value="Expressed in small intestine Peyer's patch and 31 other cell types or tissues"/>
</dbReference>
<dbReference type="GO" id="GO:0005576">
    <property type="term" value="C:extracellular region"/>
    <property type="evidence" value="ECO:0007669"/>
    <property type="project" value="UniProtKB-SubCell"/>
</dbReference>
<dbReference type="GO" id="GO:0034774">
    <property type="term" value="C:secretory granule lumen"/>
    <property type="evidence" value="ECO:0000304"/>
    <property type="project" value="Reactome"/>
</dbReference>
<dbReference type="GO" id="GO:0031767">
    <property type="term" value="F:gastric inhibitory polypeptide receptor binding"/>
    <property type="evidence" value="ECO:0007669"/>
    <property type="project" value="Ensembl"/>
</dbReference>
<dbReference type="GO" id="GO:0005179">
    <property type="term" value="F:hormone activity"/>
    <property type="evidence" value="ECO:0007669"/>
    <property type="project" value="UniProtKB-KW"/>
</dbReference>
<dbReference type="GO" id="GO:0048018">
    <property type="term" value="F:receptor ligand activity"/>
    <property type="evidence" value="ECO:0000314"/>
    <property type="project" value="MGI"/>
</dbReference>
<dbReference type="GO" id="GO:0007189">
    <property type="term" value="P:adenylate cyclase-activating G protein-coupled receptor signaling pathway"/>
    <property type="evidence" value="ECO:0000314"/>
    <property type="project" value="MGI"/>
</dbReference>
<dbReference type="GO" id="GO:0008344">
    <property type="term" value="P:adult locomotory behavior"/>
    <property type="evidence" value="ECO:0000314"/>
    <property type="project" value="MGI"/>
</dbReference>
<dbReference type="GO" id="GO:0031018">
    <property type="term" value="P:endocrine pancreas development"/>
    <property type="evidence" value="ECO:0000315"/>
    <property type="project" value="MGI"/>
</dbReference>
<dbReference type="GO" id="GO:0035640">
    <property type="term" value="P:exploration behavior"/>
    <property type="evidence" value="ECO:0000314"/>
    <property type="project" value="MGI"/>
</dbReference>
<dbReference type="GO" id="GO:0038192">
    <property type="term" value="P:gastric inhibitory peptide signaling pathway"/>
    <property type="evidence" value="ECO:0007669"/>
    <property type="project" value="Ensembl"/>
</dbReference>
<dbReference type="GO" id="GO:0007613">
    <property type="term" value="P:memory"/>
    <property type="evidence" value="ECO:0000314"/>
    <property type="project" value="MGI"/>
</dbReference>
<dbReference type="GO" id="GO:0032024">
    <property type="term" value="P:positive regulation of insulin secretion"/>
    <property type="evidence" value="ECO:0000314"/>
    <property type="project" value="MGI"/>
</dbReference>
<dbReference type="GO" id="GO:0042304">
    <property type="term" value="P:regulation of fatty acid biosynthetic process"/>
    <property type="evidence" value="ECO:0007669"/>
    <property type="project" value="InterPro"/>
</dbReference>
<dbReference type="GO" id="GO:0009749">
    <property type="term" value="P:response to glucose"/>
    <property type="evidence" value="ECO:0007669"/>
    <property type="project" value="InterPro"/>
</dbReference>
<dbReference type="GO" id="GO:0019233">
    <property type="term" value="P:sensory perception of pain"/>
    <property type="evidence" value="ECO:0000314"/>
    <property type="project" value="MGI"/>
</dbReference>
<dbReference type="Gene3D" id="6.10.250.590">
    <property type="match status" value="1"/>
</dbReference>
<dbReference type="InterPro" id="IPR039078">
    <property type="entry name" value="GIP"/>
</dbReference>
<dbReference type="InterPro" id="IPR000532">
    <property type="entry name" value="Glucagon_GIP_secretin_VIP"/>
</dbReference>
<dbReference type="PANTHER" id="PTHR15211:SF0">
    <property type="entry name" value="GASTRIC INHIBITORY POLYPEPTIDE"/>
    <property type="match status" value="1"/>
</dbReference>
<dbReference type="PANTHER" id="PTHR15211">
    <property type="entry name" value="GLUCOSE-DEPENDENT INSULINOTROPIC POLYPEPTIDE"/>
    <property type="match status" value="1"/>
</dbReference>
<dbReference type="Pfam" id="PF00123">
    <property type="entry name" value="Hormone_2"/>
    <property type="match status" value="1"/>
</dbReference>
<dbReference type="SMART" id="SM00070">
    <property type="entry name" value="GLUCA"/>
    <property type="match status" value="1"/>
</dbReference>
<dbReference type="PROSITE" id="PS00260">
    <property type="entry name" value="GLUCAGON"/>
    <property type="match status" value="1"/>
</dbReference>
<evidence type="ECO:0000250" key="1"/>
<evidence type="ECO:0000256" key="2">
    <source>
        <dbReference type="SAM" id="MobiDB-lite"/>
    </source>
</evidence>
<evidence type="ECO:0000305" key="3"/>